<keyword id="KW-0274">FAD</keyword>
<keyword id="KW-0285">Flavoprotein</keyword>
<keyword id="KW-0472">Membrane</keyword>
<keyword id="KW-0496">Mitochondrion</keyword>
<keyword id="KW-1000">Mitochondrion outer membrane</keyword>
<keyword id="KW-0520">NAD</keyword>
<keyword id="KW-0560">Oxidoreductase</keyword>
<keyword id="KW-0808">Transferase</keyword>
<keyword id="KW-0812">Transmembrane</keyword>
<keyword id="KW-1133">Transmembrane helix</keyword>
<evidence type="ECO:0000250" key="1"/>
<evidence type="ECO:0000250" key="2">
    <source>
        <dbReference type="UniProtKB" id="P38626"/>
    </source>
</evidence>
<evidence type="ECO:0000255" key="3"/>
<evidence type="ECO:0000255" key="4">
    <source>
        <dbReference type="PROSITE-ProRule" id="PRU00716"/>
    </source>
</evidence>
<evidence type="ECO:0000305" key="5"/>
<name>NCB5R_CRYNB</name>
<sequence>MFTIEVLAQKLAPHASFLGGLVVAAILGLFIFFQEKDRKVLDPVEWRSFKLVDKDHLSHNTALYRFALPRASDSLGLPIGQHISVAAEINGKQVVRSYTPTTLDDDKGHFDLVVKTYEKGNISRYLSLLTIGQEIKVKGPKGKFVYTPNMAPHLVMIAGGTGITPMYQIIKSSIKTPGDKTRLSLIYANIQEDDILLKKEIDELQAKSNGRFDVKYVLNNPPEGWTGGVGFVTKEMIEEAMPSSGVGSANHGEGHKVLMCGPPPMITAMKGHLAQIGYPAPRSVSKLEDQVFLF</sequence>
<feature type="chain" id="PRO_0000410164" description="NADH-cytochrome b5 reductase 1">
    <location>
        <begin position="1"/>
        <end position="294"/>
    </location>
</feature>
<feature type="transmembrane region" description="Helical" evidence="3">
    <location>
        <begin position="13"/>
        <end position="33"/>
    </location>
</feature>
<feature type="domain" description="FAD-binding FR-type" evidence="4">
    <location>
        <begin position="44"/>
        <end position="147"/>
    </location>
</feature>
<feature type="binding site" evidence="1">
    <location>
        <begin position="127"/>
        <end position="142"/>
    </location>
    <ligand>
        <name>FAD</name>
        <dbReference type="ChEBI" id="CHEBI:57692"/>
    </ligand>
</feature>
<feature type="binding site" evidence="1">
    <location>
        <begin position="153"/>
        <end position="185"/>
    </location>
    <ligand>
        <name>FAD</name>
        <dbReference type="ChEBI" id="CHEBI:57692"/>
    </ligand>
</feature>
<protein>
    <recommendedName>
        <fullName>NADH-cytochrome b5 reductase 1</fullName>
        <ecNumber evidence="2">1.6.2.2</ecNumber>
    </recommendedName>
    <alternativeName>
        <fullName>Microsomal cytochrome b reductase</fullName>
    </alternativeName>
</protein>
<proteinExistence type="inferred from homology"/>
<dbReference type="EC" id="1.6.2.2" evidence="2"/>
<dbReference type="EMBL" id="AAEY01000059">
    <property type="protein sequence ID" value="EAL17609.1"/>
    <property type="molecule type" value="Genomic_DNA"/>
</dbReference>
<dbReference type="RefSeq" id="XP_772256.1">
    <property type="nucleotide sequence ID" value="XM_767163.1"/>
</dbReference>
<dbReference type="SMR" id="P0CP15"/>
<dbReference type="EnsemblFungi" id="AAW46852">
    <property type="protein sequence ID" value="AAW46852"/>
    <property type="gene ID" value="CNM00240"/>
</dbReference>
<dbReference type="GeneID" id="4939366"/>
<dbReference type="KEGG" id="cnb:CNBM0240"/>
<dbReference type="VEuPathDB" id="FungiDB:CNBM0240"/>
<dbReference type="HOGENOM" id="CLU_003827_9_0_1"/>
<dbReference type="OrthoDB" id="3645at5206"/>
<dbReference type="UniPathway" id="UPA00559"/>
<dbReference type="GO" id="GO:0005741">
    <property type="term" value="C:mitochondrial outer membrane"/>
    <property type="evidence" value="ECO:0007669"/>
    <property type="project" value="UniProtKB-SubCell"/>
</dbReference>
<dbReference type="GO" id="GO:0090560">
    <property type="term" value="F:2-(3-amino-3-carboxypropyl)histidine synthase activity"/>
    <property type="evidence" value="ECO:0007669"/>
    <property type="project" value="EnsemblFungi"/>
</dbReference>
<dbReference type="GO" id="GO:0004128">
    <property type="term" value="F:cytochrome-b5 reductase activity, acting on NAD(P)H"/>
    <property type="evidence" value="ECO:0000250"/>
    <property type="project" value="UniProtKB"/>
</dbReference>
<dbReference type="GO" id="GO:0003954">
    <property type="term" value="F:NADH dehydrogenase activity"/>
    <property type="evidence" value="ECO:0000250"/>
    <property type="project" value="UniProtKB"/>
</dbReference>
<dbReference type="GO" id="GO:0017183">
    <property type="term" value="P:protein histidyl modification to diphthamide"/>
    <property type="evidence" value="ECO:0000250"/>
    <property type="project" value="UniProtKB"/>
</dbReference>
<dbReference type="GO" id="GO:0002926">
    <property type="term" value="P:tRNA wobble base 5-methoxycarbonylmethyl-2-thiouridinylation"/>
    <property type="evidence" value="ECO:0000250"/>
    <property type="project" value="UniProtKB"/>
</dbReference>
<dbReference type="CDD" id="cd06183">
    <property type="entry name" value="cyt_b5_reduct_like"/>
    <property type="match status" value="1"/>
</dbReference>
<dbReference type="FunFam" id="2.40.30.10:FF:000032">
    <property type="entry name" value="NADH-cytochrome b5 reductase"/>
    <property type="match status" value="1"/>
</dbReference>
<dbReference type="FunFam" id="3.40.50.80:FF:000019">
    <property type="entry name" value="NADH-cytochrome b5 reductase"/>
    <property type="match status" value="1"/>
</dbReference>
<dbReference type="Gene3D" id="3.40.50.80">
    <property type="entry name" value="Nucleotide-binding domain of ferredoxin-NADP reductase (FNR) module"/>
    <property type="match status" value="1"/>
</dbReference>
<dbReference type="Gene3D" id="2.40.30.10">
    <property type="entry name" value="Translation factors"/>
    <property type="match status" value="1"/>
</dbReference>
<dbReference type="InterPro" id="IPR001834">
    <property type="entry name" value="CBR-like"/>
</dbReference>
<dbReference type="InterPro" id="IPR008333">
    <property type="entry name" value="Cbr1-like_FAD-bd_dom"/>
</dbReference>
<dbReference type="InterPro" id="IPR017927">
    <property type="entry name" value="FAD-bd_FR_type"/>
</dbReference>
<dbReference type="InterPro" id="IPR001709">
    <property type="entry name" value="Flavoprot_Pyr_Nucl_cyt_Rdtase"/>
</dbReference>
<dbReference type="InterPro" id="IPR039261">
    <property type="entry name" value="FNR_nucleotide-bd"/>
</dbReference>
<dbReference type="InterPro" id="IPR001433">
    <property type="entry name" value="OxRdtase_FAD/NAD-bd"/>
</dbReference>
<dbReference type="InterPro" id="IPR017938">
    <property type="entry name" value="Riboflavin_synthase-like_b-brl"/>
</dbReference>
<dbReference type="PANTHER" id="PTHR19370">
    <property type="entry name" value="NADH-CYTOCHROME B5 REDUCTASE"/>
    <property type="match status" value="1"/>
</dbReference>
<dbReference type="PANTHER" id="PTHR19370:SF184">
    <property type="entry name" value="NADH-CYTOCHROME B5 REDUCTASE-LIKE"/>
    <property type="match status" value="1"/>
</dbReference>
<dbReference type="Pfam" id="PF00970">
    <property type="entry name" value="FAD_binding_6"/>
    <property type="match status" value="1"/>
</dbReference>
<dbReference type="Pfam" id="PF00175">
    <property type="entry name" value="NAD_binding_1"/>
    <property type="match status" value="1"/>
</dbReference>
<dbReference type="PRINTS" id="PR00406">
    <property type="entry name" value="CYTB5RDTASE"/>
</dbReference>
<dbReference type="PRINTS" id="PR00371">
    <property type="entry name" value="FPNCR"/>
</dbReference>
<dbReference type="SUPFAM" id="SSF52343">
    <property type="entry name" value="Ferredoxin reductase-like, C-terminal NADP-linked domain"/>
    <property type="match status" value="1"/>
</dbReference>
<dbReference type="SUPFAM" id="SSF63380">
    <property type="entry name" value="Riboflavin synthase domain-like"/>
    <property type="match status" value="1"/>
</dbReference>
<dbReference type="PROSITE" id="PS51384">
    <property type="entry name" value="FAD_FR"/>
    <property type="match status" value="1"/>
</dbReference>
<comment type="function">
    <text evidence="2">NADH-dependent reductase for DPH3 and cytochrome b5. Required for the first step of diphthamide biosynthesis, a post-translational modification of histidine which occurs in elongation factor 2. DPH1 and DPH2 transfer a 3-amino-3-carboxypropyl (ACP) group from S-adenosyl-L-methionine (SAM) to a histidine residue, the reaction is assisted by a reduction system comprising DPH3 and a NADH-dependent reductase, predominantly CBR1. By reducing DPH3, also involved in the formation of the tRNA wobble base modification mcm5s 2U (5-methoxycarbonylmethyl-2-thiouridine), mediated by the elongator complex. The cytochrome b5/NADH cytochrome b5 reductase electron transfer system supports the catalytic activity of several sterol biosynthetic enzymes.</text>
</comment>
<comment type="catalytic activity">
    <reaction evidence="2">
        <text>2 Fe(III)-[cytochrome b5] + NADH = 2 Fe(II)-[cytochrome b5] + NAD(+) + H(+)</text>
        <dbReference type="Rhea" id="RHEA:46680"/>
        <dbReference type="Rhea" id="RHEA-COMP:10438"/>
        <dbReference type="Rhea" id="RHEA-COMP:10439"/>
        <dbReference type="ChEBI" id="CHEBI:15378"/>
        <dbReference type="ChEBI" id="CHEBI:29033"/>
        <dbReference type="ChEBI" id="CHEBI:29034"/>
        <dbReference type="ChEBI" id="CHEBI:57540"/>
        <dbReference type="ChEBI" id="CHEBI:57945"/>
        <dbReference type="EC" id="1.6.2.2"/>
    </reaction>
</comment>
<comment type="catalytic activity">
    <reaction evidence="2">
        <text>2 Fe(3+)-[Dph3] + NADH = 2 Fe(2+)-[Dph3] + NAD(+) + H(+)</text>
        <dbReference type="Rhea" id="RHEA:71231"/>
        <dbReference type="Rhea" id="RHEA-COMP:18002"/>
        <dbReference type="Rhea" id="RHEA-COMP:18003"/>
        <dbReference type="ChEBI" id="CHEBI:15378"/>
        <dbReference type="ChEBI" id="CHEBI:29033"/>
        <dbReference type="ChEBI" id="CHEBI:29034"/>
        <dbReference type="ChEBI" id="CHEBI:57540"/>
        <dbReference type="ChEBI" id="CHEBI:57945"/>
        <dbReference type="ChEBI" id="CHEBI:83228"/>
    </reaction>
    <physiologicalReaction direction="left-to-right" evidence="2">
        <dbReference type="Rhea" id="RHEA:71232"/>
    </physiologicalReaction>
</comment>
<comment type="cofactor">
    <cofactor evidence="3">
        <name>FAD</name>
        <dbReference type="ChEBI" id="CHEBI:57692"/>
    </cofactor>
</comment>
<comment type="pathway">
    <text evidence="2">Protein modification; peptidyl-diphthamide biosynthesis.</text>
</comment>
<comment type="subunit">
    <text evidence="2">Monomer. Component of the 2-(3-amino-3-carboxypropyl)histidine synthase complex composed of DPH1, DPH2, DPH3 and a NADH-dependent reductase, predominantly CBR1.</text>
</comment>
<comment type="subcellular location">
    <subcellularLocation>
        <location evidence="2">Mitochondrion outer membrane</location>
        <topology evidence="3">Single-pass membrane protein</topology>
    </subcellularLocation>
</comment>
<comment type="similarity">
    <text evidence="5">Belongs to the flavoprotein pyridine nucleotide cytochrome reductase family.</text>
</comment>
<reference key="1">
    <citation type="journal article" date="2005" name="Science">
        <title>The genome of the basidiomycetous yeast and human pathogen Cryptococcus neoformans.</title>
        <authorList>
            <person name="Loftus B.J."/>
            <person name="Fung E."/>
            <person name="Roncaglia P."/>
            <person name="Rowley D."/>
            <person name="Amedeo P."/>
            <person name="Bruno D."/>
            <person name="Vamathevan J."/>
            <person name="Miranda M."/>
            <person name="Anderson I.J."/>
            <person name="Fraser J.A."/>
            <person name="Allen J.E."/>
            <person name="Bosdet I.E."/>
            <person name="Brent M.R."/>
            <person name="Chiu R."/>
            <person name="Doering T.L."/>
            <person name="Donlin M.J."/>
            <person name="D'Souza C.A."/>
            <person name="Fox D.S."/>
            <person name="Grinberg V."/>
            <person name="Fu J."/>
            <person name="Fukushima M."/>
            <person name="Haas B.J."/>
            <person name="Huang J.C."/>
            <person name="Janbon G."/>
            <person name="Jones S.J.M."/>
            <person name="Koo H.L."/>
            <person name="Krzywinski M.I."/>
            <person name="Kwon-Chung K.J."/>
            <person name="Lengeler K.B."/>
            <person name="Maiti R."/>
            <person name="Marra M.A."/>
            <person name="Marra R.E."/>
            <person name="Mathewson C.A."/>
            <person name="Mitchell T.G."/>
            <person name="Pertea M."/>
            <person name="Riggs F.R."/>
            <person name="Salzberg S.L."/>
            <person name="Schein J.E."/>
            <person name="Shvartsbeyn A."/>
            <person name="Shin H."/>
            <person name="Shumway M."/>
            <person name="Specht C.A."/>
            <person name="Suh B.B."/>
            <person name="Tenney A."/>
            <person name="Utterback T.R."/>
            <person name="Wickes B.L."/>
            <person name="Wortman J.R."/>
            <person name="Wye N.H."/>
            <person name="Kronstad J.W."/>
            <person name="Lodge J.K."/>
            <person name="Heitman J."/>
            <person name="Davis R.W."/>
            <person name="Fraser C.M."/>
            <person name="Hyman R.W."/>
        </authorList>
    </citation>
    <scope>NUCLEOTIDE SEQUENCE [LARGE SCALE GENOMIC DNA]</scope>
    <source>
        <strain>B-3501A</strain>
    </source>
</reference>
<gene>
    <name type="primary">CBR1</name>
    <name type="ordered locus">CNBM0240</name>
</gene>
<accession>P0CP15</accession>
<accession>Q55IJ8</accession>
<accession>Q5K838</accession>
<organism>
    <name type="scientific">Cryptococcus neoformans var. neoformans serotype D (strain B-3501A)</name>
    <name type="common">Filobasidiella neoformans</name>
    <dbReference type="NCBI Taxonomy" id="283643"/>
    <lineage>
        <taxon>Eukaryota</taxon>
        <taxon>Fungi</taxon>
        <taxon>Dikarya</taxon>
        <taxon>Basidiomycota</taxon>
        <taxon>Agaricomycotina</taxon>
        <taxon>Tremellomycetes</taxon>
        <taxon>Tremellales</taxon>
        <taxon>Cryptococcaceae</taxon>
        <taxon>Cryptococcus</taxon>
        <taxon>Cryptococcus neoformans species complex</taxon>
    </lineage>
</organism>